<keyword id="KW-0997">Cell inner membrane</keyword>
<keyword id="KW-1003">Cell membrane</keyword>
<keyword id="KW-0472">Membrane</keyword>
<keyword id="KW-1185">Reference proteome</keyword>
<keyword id="KW-0812">Transmembrane</keyword>
<keyword id="KW-1133">Transmembrane helix</keyword>
<keyword id="KW-0813">Transport</keyword>
<organism>
    <name type="scientific">Photorhabdus laumondii subsp. laumondii (strain DSM 15139 / CIP 105565 / TT01)</name>
    <name type="common">Photorhabdus luminescens subsp. laumondii</name>
    <dbReference type="NCBI Taxonomy" id="243265"/>
    <lineage>
        <taxon>Bacteria</taxon>
        <taxon>Pseudomonadati</taxon>
        <taxon>Pseudomonadota</taxon>
        <taxon>Gammaproteobacteria</taxon>
        <taxon>Enterobacterales</taxon>
        <taxon>Morganellaceae</taxon>
        <taxon>Photorhabdus</taxon>
    </lineage>
</organism>
<name>MDTJ_PHOLL</name>
<comment type="function">
    <text evidence="1">Catalyzes the excretion of spermidine.</text>
</comment>
<comment type="subunit">
    <text evidence="1">Forms a complex with MdtI.</text>
</comment>
<comment type="subcellular location">
    <subcellularLocation>
        <location evidence="1">Cell inner membrane</location>
        <topology evidence="1">Multi-pass membrane protein</topology>
    </subcellularLocation>
</comment>
<comment type="similarity">
    <text evidence="1">Belongs to the drug/metabolite transporter (DMT) superfamily. Small multidrug resistance (SMR) (TC 2.A.7.1) family. MdtJ subfamily.</text>
</comment>
<sequence>MIYWLFLAMAIITEVIGTLSMKHASVSGGVVGMAVMYIMIATSYILLAMAVKKVALGVAYALWEGVGILFITVFSVMWFDESLSLMKVGGLALLITGIMLIKSGTRKAAVKKSAEVVKQMANKAVSVATTKSSKIKEA</sequence>
<reference key="1">
    <citation type="journal article" date="2003" name="Nat. Biotechnol.">
        <title>The genome sequence of the entomopathogenic bacterium Photorhabdus luminescens.</title>
        <authorList>
            <person name="Duchaud E."/>
            <person name="Rusniok C."/>
            <person name="Frangeul L."/>
            <person name="Buchrieser C."/>
            <person name="Givaudan A."/>
            <person name="Taourit S."/>
            <person name="Bocs S."/>
            <person name="Boursaux-Eude C."/>
            <person name="Chandler M."/>
            <person name="Charles J.-F."/>
            <person name="Dassa E."/>
            <person name="Derose R."/>
            <person name="Derzelle S."/>
            <person name="Freyssinet G."/>
            <person name="Gaudriault S."/>
            <person name="Medigue C."/>
            <person name="Lanois A."/>
            <person name="Powell K."/>
            <person name="Siguier P."/>
            <person name="Vincent R."/>
            <person name="Wingate V."/>
            <person name="Zouine M."/>
            <person name="Glaser P."/>
            <person name="Boemare N."/>
            <person name="Danchin A."/>
            <person name="Kunst F."/>
        </authorList>
    </citation>
    <scope>NUCLEOTIDE SEQUENCE [LARGE SCALE GENOMIC DNA]</scope>
    <source>
        <strain>DSM 15139 / CIP 105565 / TT01</strain>
    </source>
</reference>
<accession>Q7N537</accession>
<dbReference type="EMBL" id="BX571866">
    <property type="protein sequence ID" value="CAE14416.1"/>
    <property type="molecule type" value="Genomic_DNA"/>
</dbReference>
<dbReference type="RefSeq" id="WP_011146377.1">
    <property type="nucleotide sequence ID" value="NC_005126.1"/>
</dbReference>
<dbReference type="SMR" id="Q7N537"/>
<dbReference type="STRING" id="243265.plu2123"/>
<dbReference type="GeneID" id="48848402"/>
<dbReference type="KEGG" id="plu:plu2123"/>
<dbReference type="eggNOG" id="COG2076">
    <property type="taxonomic scope" value="Bacteria"/>
</dbReference>
<dbReference type="HOGENOM" id="CLU_133067_0_0_6"/>
<dbReference type="OrthoDB" id="9808638at2"/>
<dbReference type="Proteomes" id="UP000002514">
    <property type="component" value="Chromosome"/>
</dbReference>
<dbReference type="GO" id="GO:0005886">
    <property type="term" value="C:plasma membrane"/>
    <property type="evidence" value="ECO:0007669"/>
    <property type="project" value="UniProtKB-SubCell"/>
</dbReference>
<dbReference type="GO" id="GO:0015199">
    <property type="term" value="F:amino-acid betaine transmembrane transporter activity"/>
    <property type="evidence" value="ECO:0007669"/>
    <property type="project" value="TreeGrafter"/>
</dbReference>
<dbReference type="GO" id="GO:0015297">
    <property type="term" value="F:antiporter activity"/>
    <property type="evidence" value="ECO:0007669"/>
    <property type="project" value="TreeGrafter"/>
</dbReference>
<dbReference type="GO" id="GO:0015220">
    <property type="term" value="F:choline transmembrane transporter activity"/>
    <property type="evidence" value="ECO:0007669"/>
    <property type="project" value="TreeGrafter"/>
</dbReference>
<dbReference type="GO" id="GO:0015606">
    <property type="term" value="F:spermidine transmembrane transporter activity"/>
    <property type="evidence" value="ECO:0007669"/>
    <property type="project" value="UniProtKB-UniRule"/>
</dbReference>
<dbReference type="GO" id="GO:0031460">
    <property type="term" value="P:glycine betaine transport"/>
    <property type="evidence" value="ECO:0007669"/>
    <property type="project" value="TreeGrafter"/>
</dbReference>
<dbReference type="Gene3D" id="1.10.3730.20">
    <property type="match status" value="1"/>
</dbReference>
<dbReference type="HAMAP" id="MF_01598">
    <property type="entry name" value="MdtJ"/>
    <property type="match status" value="1"/>
</dbReference>
<dbReference type="InterPro" id="IPR000390">
    <property type="entry name" value="Small_drug/metabolite_transptr"/>
</dbReference>
<dbReference type="InterPro" id="IPR045324">
    <property type="entry name" value="Small_multidrug_res"/>
</dbReference>
<dbReference type="InterPro" id="IPR023740">
    <property type="entry name" value="Spermidine_export_MdtJ"/>
</dbReference>
<dbReference type="NCBIfam" id="NF007767">
    <property type="entry name" value="PRK10452.1"/>
    <property type="match status" value="1"/>
</dbReference>
<dbReference type="PANTHER" id="PTHR30561">
    <property type="entry name" value="SMR FAMILY PROTON-DEPENDENT DRUG EFFLUX TRANSPORTER SUGE"/>
    <property type="match status" value="1"/>
</dbReference>
<dbReference type="PANTHER" id="PTHR30561:SF2">
    <property type="entry name" value="SPERMIDINE EXPORT PROTEIN MDTJ"/>
    <property type="match status" value="1"/>
</dbReference>
<dbReference type="Pfam" id="PF00893">
    <property type="entry name" value="Multi_Drug_Res"/>
    <property type="match status" value="1"/>
</dbReference>
<dbReference type="SUPFAM" id="SSF103481">
    <property type="entry name" value="Multidrug resistance efflux transporter EmrE"/>
    <property type="match status" value="1"/>
</dbReference>
<protein>
    <recommendedName>
        <fullName evidence="1">Spermidine export protein MdtJ</fullName>
    </recommendedName>
</protein>
<evidence type="ECO:0000255" key="1">
    <source>
        <dbReference type="HAMAP-Rule" id="MF_01598"/>
    </source>
</evidence>
<proteinExistence type="inferred from homology"/>
<gene>
    <name evidence="1" type="primary">mdtJ</name>
    <name type="ordered locus">plu2123</name>
</gene>
<feature type="chain" id="PRO_0000331172" description="Spermidine export protein MdtJ">
    <location>
        <begin position="1"/>
        <end position="138"/>
    </location>
</feature>
<feature type="transmembrane region" description="Helical" evidence="1">
    <location>
        <begin position="1"/>
        <end position="21"/>
    </location>
</feature>
<feature type="transmembrane region" description="Helical" evidence="1">
    <location>
        <begin position="30"/>
        <end position="50"/>
    </location>
</feature>
<feature type="transmembrane region" description="Helical" evidence="1">
    <location>
        <begin position="54"/>
        <end position="74"/>
    </location>
</feature>
<feature type="transmembrane region" description="Helical" evidence="1">
    <location>
        <begin position="81"/>
        <end position="101"/>
    </location>
</feature>